<protein>
    <recommendedName>
        <fullName>Uncharacterized protein C1235.01</fullName>
    </recommendedName>
</protein>
<reference key="1">
    <citation type="journal article" date="2002" name="Nature">
        <title>The genome sequence of Schizosaccharomyces pombe.</title>
        <authorList>
            <person name="Wood V."/>
            <person name="Gwilliam R."/>
            <person name="Rajandream M.A."/>
            <person name="Lyne M.H."/>
            <person name="Lyne R."/>
            <person name="Stewart A."/>
            <person name="Sgouros J.G."/>
            <person name="Peat N."/>
            <person name="Hayles J."/>
            <person name="Baker S.G."/>
            <person name="Basham D."/>
            <person name="Bowman S."/>
            <person name="Brooks K."/>
            <person name="Brown D."/>
            <person name="Brown S."/>
            <person name="Chillingworth T."/>
            <person name="Churcher C.M."/>
            <person name="Collins M."/>
            <person name="Connor R."/>
            <person name="Cronin A."/>
            <person name="Davis P."/>
            <person name="Feltwell T."/>
            <person name="Fraser A."/>
            <person name="Gentles S."/>
            <person name="Goble A."/>
            <person name="Hamlin N."/>
            <person name="Harris D.E."/>
            <person name="Hidalgo J."/>
            <person name="Hodgson G."/>
            <person name="Holroyd S."/>
            <person name="Hornsby T."/>
            <person name="Howarth S."/>
            <person name="Huckle E.J."/>
            <person name="Hunt S."/>
            <person name="Jagels K."/>
            <person name="James K.D."/>
            <person name="Jones L."/>
            <person name="Jones M."/>
            <person name="Leather S."/>
            <person name="McDonald S."/>
            <person name="McLean J."/>
            <person name="Mooney P."/>
            <person name="Moule S."/>
            <person name="Mungall K.L."/>
            <person name="Murphy L.D."/>
            <person name="Niblett D."/>
            <person name="Odell C."/>
            <person name="Oliver K."/>
            <person name="O'Neil S."/>
            <person name="Pearson D."/>
            <person name="Quail M.A."/>
            <person name="Rabbinowitsch E."/>
            <person name="Rutherford K.M."/>
            <person name="Rutter S."/>
            <person name="Saunders D."/>
            <person name="Seeger K."/>
            <person name="Sharp S."/>
            <person name="Skelton J."/>
            <person name="Simmonds M.N."/>
            <person name="Squares R."/>
            <person name="Squares S."/>
            <person name="Stevens K."/>
            <person name="Taylor K."/>
            <person name="Taylor R.G."/>
            <person name="Tivey A."/>
            <person name="Walsh S.V."/>
            <person name="Warren T."/>
            <person name="Whitehead S."/>
            <person name="Woodward J.R."/>
            <person name="Volckaert G."/>
            <person name="Aert R."/>
            <person name="Robben J."/>
            <person name="Grymonprez B."/>
            <person name="Weltjens I."/>
            <person name="Vanstreels E."/>
            <person name="Rieger M."/>
            <person name="Schaefer M."/>
            <person name="Mueller-Auer S."/>
            <person name="Gabel C."/>
            <person name="Fuchs M."/>
            <person name="Duesterhoeft A."/>
            <person name="Fritzc C."/>
            <person name="Holzer E."/>
            <person name="Moestl D."/>
            <person name="Hilbert H."/>
            <person name="Borzym K."/>
            <person name="Langer I."/>
            <person name="Beck A."/>
            <person name="Lehrach H."/>
            <person name="Reinhardt R."/>
            <person name="Pohl T.M."/>
            <person name="Eger P."/>
            <person name="Zimmermann W."/>
            <person name="Wedler H."/>
            <person name="Wambutt R."/>
            <person name="Purnelle B."/>
            <person name="Goffeau A."/>
            <person name="Cadieu E."/>
            <person name="Dreano S."/>
            <person name="Gloux S."/>
            <person name="Lelaure V."/>
            <person name="Mottier S."/>
            <person name="Galibert F."/>
            <person name="Aves S.J."/>
            <person name="Xiang Z."/>
            <person name="Hunt C."/>
            <person name="Moore K."/>
            <person name="Hurst S.M."/>
            <person name="Lucas M."/>
            <person name="Rochet M."/>
            <person name="Gaillardin C."/>
            <person name="Tallada V.A."/>
            <person name="Garzon A."/>
            <person name="Thode G."/>
            <person name="Daga R.R."/>
            <person name="Cruzado L."/>
            <person name="Jimenez J."/>
            <person name="Sanchez M."/>
            <person name="del Rey F."/>
            <person name="Benito J."/>
            <person name="Dominguez A."/>
            <person name="Revuelta J.L."/>
            <person name="Moreno S."/>
            <person name="Armstrong J."/>
            <person name="Forsburg S.L."/>
            <person name="Cerutti L."/>
            <person name="Lowe T."/>
            <person name="McCombie W.R."/>
            <person name="Paulsen I."/>
            <person name="Potashkin J."/>
            <person name="Shpakovski G.V."/>
            <person name="Ussery D."/>
            <person name="Barrell B.G."/>
            <person name="Nurse P."/>
        </authorList>
    </citation>
    <scope>NUCLEOTIDE SEQUENCE [LARGE SCALE GENOMIC DNA]</scope>
    <source>
        <strain>972 / ATCC 24843</strain>
    </source>
</reference>
<reference key="2">
    <citation type="journal article" date="2006" name="Nat. Biotechnol.">
        <title>ORFeome cloning and global analysis of protein localization in the fission yeast Schizosaccharomyces pombe.</title>
        <authorList>
            <person name="Matsuyama A."/>
            <person name="Arai R."/>
            <person name="Yashiroda Y."/>
            <person name="Shirai A."/>
            <person name="Kamata A."/>
            <person name="Sekido S."/>
            <person name="Kobayashi Y."/>
            <person name="Hashimoto A."/>
            <person name="Hamamoto M."/>
            <person name="Hiraoka Y."/>
            <person name="Horinouchi S."/>
            <person name="Yoshida M."/>
        </authorList>
    </citation>
    <scope>SUBCELLULAR LOCATION [LARGE SCALE ANALYSIS]</scope>
</reference>
<organism>
    <name type="scientific">Schizosaccharomyces pombe (strain 972 / ATCC 24843)</name>
    <name type="common">Fission yeast</name>
    <dbReference type="NCBI Taxonomy" id="284812"/>
    <lineage>
        <taxon>Eukaryota</taxon>
        <taxon>Fungi</taxon>
        <taxon>Dikarya</taxon>
        <taxon>Ascomycota</taxon>
        <taxon>Taphrinomycotina</taxon>
        <taxon>Schizosaccharomycetes</taxon>
        <taxon>Schizosaccharomycetales</taxon>
        <taxon>Schizosaccharomycetaceae</taxon>
        <taxon>Schizosaccharomyces</taxon>
    </lineage>
</organism>
<comment type="subcellular location">
    <subcellularLocation>
        <location evidence="2">Cytoplasm</location>
    </subcellularLocation>
</comment>
<accession>O59779</accession>
<accession>Q1MTQ8</accession>
<evidence type="ECO:0000256" key="1">
    <source>
        <dbReference type="SAM" id="MobiDB-lite"/>
    </source>
</evidence>
<evidence type="ECO:0000269" key="2">
    <source>
    </source>
</evidence>
<gene>
    <name type="ORF">SPCC1235.01</name>
    <name type="ORF">SPCC320.02c</name>
</gene>
<sequence length="658" mass="69696">MTATIIAAITITTIVIITPMEEITTMTIPMEEITTMTIPMEEITTMTIPMEEITTMTTPMEEITTITTPMEETTTITPMVETTTILPMAAMTTPMVETTTIPTVETTTTPMVETTTITPMVETTTITPMVEAMITLMEETMTTPMEETTTILPMAAMTTPMEETTTTTPMVETTTIPTVETMTTPMVEAMTILPMAAMTTPMEETTTTPMEETTTTPMVETMITPMVEAMTTPTEVVGRSMVSTIRTTTPMEAMITPTVETTTLPTAAMTTPVEETTTTPMVETMITPTVVTTTTPMVETMITPTVVTTTPMVILVMAVVMETTINIVGNNDSIPSQNFKSGKTFVSNANSSNSNDGSSSKSLDVGSFVNAFKQLNVNDNSSNNNSSGNTDSSTIGYAAVFAAAGKFFSQHSCDLASGNKSAQEGQNQFLSMVESEAKNLMNKTNYSANQSQNGNSQNSGNPVSQAIDLAKSLFQNRNLLTKLAQSGVLTNAAQGSSGGLSAAAVSGLIGSFMGSSSNNSNSSNNNSNTSNNNSNTSNNESMVSKLSSLSGMASSFLGSSGNNNNNNNSNSGNYNNNNSGNNNQQHQQSSSSLQGLASSFLNSSSGNSNKQNYNNNNNQNYGNNNNQNYNNNNNSSQGGNSQGGSGLLGQAVNMFLKS</sequence>
<keyword id="KW-0963">Cytoplasm</keyword>
<keyword id="KW-1185">Reference proteome</keyword>
<dbReference type="EMBL" id="CU329672">
    <property type="protein sequence ID" value="CAA18304.1"/>
    <property type="molecule type" value="Genomic_DNA"/>
</dbReference>
<dbReference type="PIR" id="T41309">
    <property type="entry name" value="T41309"/>
</dbReference>
<dbReference type="RefSeq" id="NP_587727.1">
    <property type="nucleotide sequence ID" value="NM_001022722.2"/>
</dbReference>
<dbReference type="BioGRID" id="275731">
    <property type="interactions" value="19"/>
</dbReference>
<dbReference type="STRING" id="284812.O59779"/>
<dbReference type="iPTMnet" id="O59779"/>
<dbReference type="PaxDb" id="4896-SPCC1235.01.1"/>
<dbReference type="EnsemblFungi" id="SPCC1235.01.1">
    <property type="protein sequence ID" value="SPCC1235.01.1:pep"/>
    <property type="gene ID" value="SPCC1235.01"/>
</dbReference>
<dbReference type="KEGG" id="spo:2539159"/>
<dbReference type="PomBase" id="SPCC1235.01"/>
<dbReference type="VEuPathDB" id="FungiDB:SPCC1235.01"/>
<dbReference type="eggNOG" id="ENOG502RS0I">
    <property type="taxonomic scope" value="Eukaryota"/>
</dbReference>
<dbReference type="HOGENOM" id="CLU_416873_0_0_1"/>
<dbReference type="InParanoid" id="O59779"/>
<dbReference type="PRO" id="PR:O59779"/>
<dbReference type="Proteomes" id="UP000002485">
    <property type="component" value="Chromosome III"/>
</dbReference>
<dbReference type="GO" id="GO:0005829">
    <property type="term" value="C:cytosol"/>
    <property type="evidence" value="ECO:0007005"/>
    <property type="project" value="PomBase"/>
</dbReference>
<feature type="chain" id="PRO_0000303999" description="Uncharacterized protein C1235.01">
    <location>
        <begin position="1"/>
        <end position="658"/>
    </location>
</feature>
<feature type="region of interest" description="Disordered" evidence="1">
    <location>
        <begin position="516"/>
        <end position="646"/>
    </location>
</feature>
<feature type="compositionally biased region" description="Low complexity" evidence="1">
    <location>
        <begin position="516"/>
        <end position="639"/>
    </location>
</feature>
<name>YCY1_SCHPO</name>
<proteinExistence type="predicted"/>